<reference key="1">
    <citation type="journal article" date="2005" name="Nucleic Acids Res.">
        <title>Genome dynamics and diversity of Shigella species, the etiologic agents of bacillary dysentery.</title>
        <authorList>
            <person name="Yang F."/>
            <person name="Yang J."/>
            <person name="Zhang X."/>
            <person name="Chen L."/>
            <person name="Jiang Y."/>
            <person name="Yan Y."/>
            <person name="Tang X."/>
            <person name="Wang J."/>
            <person name="Xiong Z."/>
            <person name="Dong J."/>
            <person name="Xue Y."/>
            <person name="Zhu Y."/>
            <person name="Xu X."/>
            <person name="Sun L."/>
            <person name="Chen S."/>
            <person name="Nie H."/>
            <person name="Peng J."/>
            <person name="Xu J."/>
            <person name="Wang Y."/>
            <person name="Yuan Z."/>
            <person name="Wen Y."/>
            <person name="Yao Z."/>
            <person name="Shen Y."/>
            <person name="Qiang B."/>
            <person name="Hou Y."/>
            <person name="Yu J."/>
            <person name="Jin Q."/>
        </authorList>
    </citation>
    <scope>NUCLEOTIDE SEQUENCE [LARGE SCALE GENOMIC DNA]</scope>
    <source>
        <strain>Sd197</strain>
    </source>
</reference>
<gene>
    <name evidence="1" type="primary">atpF</name>
    <name type="ordered locus">SDY_4012</name>
</gene>
<keyword id="KW-0066">ATP synthesis</keyword>
<keyword id="KW-0997">Cell inner membrane</keyword>
<keyword id="KW-1003">Cell membrane</keyword>
<keyword id="KW-0138">CF(0)</keyword>
<keyword id="KW-0375">Hydrogen ion transport</keyword>
<keyword id="KW-0406">Ion transport</keyword>
<keyword id="KW-0472">Membrane</keyword>
<keyword id="KW-1185">Reference proteome</keyword>
<keyword id="KW-0812">Transmembrane</keyword>
<keyword id="KW-1133">Transmembrane helix</keyword>
<keyword id="KW-0813">Transport</keyword>
<dbReference type="EMBL" id="CP000034">
    <property type="protein sequence ID" value="ABB63930.1"/>
    <property type="molecule type" value="Genomic_DNA"/>
</dbReference>
<dbReference type="RefSeq" id="WP_001052219.1">
    <property type="nucleotide sequence ID" value="NC_007606.1"/>
</dbReference>
<dbReference type="RefSeq" id="YP_405421.1">
    <property type="nucleotide sequence ID" value="NC_007606.1"/>
</dbReference>
<dbReference type="SMR" id="Q329S5"/>
<dbReference type="STRING" id="300267.SDY_4012"/>
<dbReference type="EnsemblBacteria" id="ABB63930">
    <property type="protein sequence ID" value="ABB63930"/>
    <property type="gene ID" value="SDY_4012"/>
</dbReference>
<dbReference type="GeneID" id="93778231"/>
<dbReference type="KEGG" id="sdy:SDY_4012"/>
<dbReference type="PATRIC" id="fig|300267.13.peg.4725"/>
<dbReference type="HOGENOM" id="CLU_079215_4_5_6"/>
<dbReference type="Proteomes" id="UP000002716">
    <property type="component" value="Chromosome"/>
</dbReference>
<dbReference type="GO" id="GO:0005886">
    <property type="term" value="C:plasma membrane"/>
    <property type="evidence" value="ECO:0007669"/>
    <property type="project" value="UniProtKB-SubCell"/>
</dbReference>
<dbReference type="GO" id="GO:0045259">
    <property type="term" value="C:proton-transporting ATP synthase complex"/>
    <property type="evidence" value="ECO:0007669"/>
    <property type="project" value="UniProtKB-KW"/>
</dbReference>
<dbReference type="GO" id="GO:0046933">
    <property type="term" value="F:proton-transporting ATP synthase activity, rotational mechanism"/>
    <property type="evidence" value="ECO:0007669"/>
    <property type="project" value="UniProtKB-UniRule"/>
</dbReference>
<dbReference type="GO" id="GO:0046961">
    <property type="term" value="F:proton-transporting ATPase activity, rotational mechanism"/>
    <property type="evidence" value="ECO:0007669"/>
    <property type="project" value="TreeGrafter"/>
</dbReference>
<dbReference type="CDD" id="cd06503">
    <property type="entry name" value="ATP-synt_Fo_b"/>
    <property type="match status" value="1"/>
</dbReference>
<dbReference type="FunFam" id="1.20.5.620:FF:000001">
    <property type="entry name" value="ATP synthase subunit b"/>
    <property type="match status" value="1"/>
</dbReference>
<dbReference type="Gene3D" id="1.20.5.620">
    <property type="entry name" value="F1F0 ATP synthase subunit B, membrane domain"/>
    <property type="match status" value="1"/>
</dbReference>
<dbReference type="HAMAP" id="MF_01398">
    <property type="entry name" value="ATP_synth_b_bprime"/>
    <property type="match status" value="1"/>
</dbReference>
<dbReference type="InterPro" id="IPR028987">
    <property type="entry name" value="ATP_synth_B-like_membr_sf"/>
</dbReference>
<dbReference type="InterPro" id="IPR002146">
    <property type="entry name" value="ATP_synth_b/b'su_bac/chlpt"/>
</dbReference>
<dbReference type="InterPro" id="IPR005864">
    <property type="entry name" value="ATP_synth_F0_bsu_bac"/>
</dbReference>
<dbReference type="InterPro" id="IPR050059">
    <property type="entry name" value="ATP_synthase_B_chain"/>
</dbReference>
<dbReference type="NCBIfam" id="TIGR01144">
    <property type="entry name" value="ATP_synt_b"/>
    <property type="match status" value="1"/>
</dbReference>
<dbReference type="NCBIfam" id="NF004411">
    <property type="entry name" value="PRK05759.1-2"/>
    <property type="match status" value="1"/>
</dbReference>
<dbReference type="NCBIfam" id="NF004413">
    <property type="entry name" value="PRK05759.1-4"/>
    <property type="match status" value="1"/>
</dbReference>
<dbReference type="PANTHER" id="PTHR33445:SF1">
    <property type="entry name" value="ATP SYNTHASE SUBUNIT B"/>
    <property type="match status" value="1"/>
</dbReference>
<dbReference type="PANTHER" id="PTHR33445">
    <property type="entry name" value="ATP SYNTHASE SUBUNIT B', CHLOROPLASTIC"/>
    <property type="match status" value="1"/>
</dbReference>
<dbReference type="Pfam" id="PF00430">
    <property type="entry name" value="ATP-synt_B"/>
    <property type="match status" value="1"/>
</dbReference>
<dbReference type="SUPFAM" id="SSF81573">
    <property type="entry name" value="F1F0 ATP synthase subunit B, membrane domain"/>
    <property type="match status" value="1"/>
</dbReference>
<feature type="chain" id="PRO_0000368772" description="ATP synthase subunit b">
    <location>
        <begin position="1"/>
        <end position="156"/>
    </location>
</feature>
<feature type="transmembrane region" description="Helical" evidence="1">
    <location>
        <begin position="11"/>
        <end position="31"/>
    </location>
</feature>
<organism>
    <name type="scientific">Shigella dysenteriae serotype 1 (strain Sd197)</name>
    <dbReference type="NCBI Taxonomy" id="300267"/>
    <lineage>
        <taxon>Bacteria</taxon>
        <taxon>Pseudomonadati</taxon>
        <taxon>Pseudomonadota</taxon>
        <taxon>Gammaproteobacteria</taxon>
        <taxon>Enterobacterales</taxon>
        <taxon>Enterobacteriaceae</taxon>
        <taxon>Shigella</taxon>
    </lineage>
</organism>
<proteinExistence type="inferred from homology"/>
<evidence type="ECO:0000255" key="1">
    <source>
        <dbReference type="HAMAP-Rule" id="MF_01398"/>
    </source>
</evidence>
<name>ATPF_SHIDS</name>
<sequence>MNLNATILGQAIAFVLFVLFCMKYVWPPLMAAIEKRQKEIADGLASAERAHKDLDLAKASATDQLKKAKAEAQVIIEQANKRRSQILDEAKAEAEQERTKIVAQAQAEIEAERKRAREELRKQVAILAVAGAEKIIERSVDEAANSDIVDKLVAEL</sequence>
<comment type="function">
    <text evidence="1">F(1)F(0) ATP synthase produces ATP from ADP in the presence of a proton or sodium gradient. F-type ATPases consist of two structural domains, F(1) containing the extramembraneous catalytic core and F(0) containing the membrane proton channel, linked together by a central stalk and a peripheral stalk. During catalysis, ATP synthesis in the catalytic domain of F(1) is coupled via a rotary mechanism of the central stalk subunits to proton translocation.</text>
</comment>
<comment type="function">
    <text evidence="1">Component of the F(0) channel, it forms part of the peripheral stalk, linking F(1) to F(0).</text>
</comment>
<comment type="subunit">
    <text evidence="1">F-type ATPases have 2 components, F(1) - the catalytic core - and F(0) - the membrane proton channel. F(1) has five subunits: alpha(3), beta(3), gamma(1), delta(1), epsilon(1). F(0) has three main subunits: a(1), b(2) and c(10-14). The alpha and beta chains form an alternating ring which encloses part of the gamma chain. F(1) is attached to F(0) by a central stalk formed by the gamma and epsilon chains, while a peripheral stalk is formed by the delta and b chains.</text>
</comment>
<comment type="subcellular location">
    <subcellularLocation>
        <location evidence="1">Cell inner membrane</location>
        <topology evidence="1">Single-pass membrane protein</topology>
    </subcellularLocation>
</comment>
<comment type="similarity">
    <text evidence="1">Belongs to the ATPase B chain family.</text>
</comment>
<accession>Q329S5</accession>
<protein>
    <recommendedName>
        <fullName evidence="1">ATP synthase subunit b</fullName>
    </recommendedName>
    <alternativeName>
        <fullName evidence="1">ATP synthase F(0) sector subunit b</fullName>
    </alternativeName>
    <alternativeName>
        <fullName evidence="1">ATPase subunit I</fullName>
    </alternativeName>
    <alternativeName>
        <fullName evidence="1">F-type ATPase subunit b</fullName>
        <shortName evidence="1">F-ATPase subunit b</shortName>
    </alternativeName>
</protein>